<reference key="1">
    <citation type="journal article" date="2003" name="Nat. Genet.">
        <title>Comparative analysis of the genome sequences of Bordetella pertussis, Bordetella parapertussis and Bordetella bronchiseptica.</title>
        <authorList>
            <person name="Parkhill J."/>
            <person name="Sebaihia M."/>
            <person name="Preston A."/>
            <person name="Murphy L.D."/>
            <person name="Thomson N.R."/>
            <person name="Harris D.E."/>
            <person name="Holden M.T.G."/>
            <person name="Churcher C.M."/>
            <person name="Bentley S.D."/>
            <person name="Mungall K.L."/>
            <person name="Cerdeno-Tarraga A.-M."/>
            <person name="Temple L."/>
            <person name="James K.D."/>
            <person name="Harris B."/>
            <person name="Quail M.A."/>
            <person name="Achtman M."/>
            <person name="Atkin R."/>
            <person name="Baker S."/>
            <person name="Basham D."/>
            <person name="Bason N."/>
            <person name="Cherevach I."/>
            <person name="Chillingworth T."/>
            <person name="Collins M."/>
            <person name="Cronin A."/>
            <person name="Davis P."/>
            <person name="Doggett J."/>
            <person name="Feltwell T."/>
            <person name="Goble A."/>
            <person name="Hamlin N."/>
            <person name="Hauser H."/>
            <person name="Holroyd S."/>
            <person name="Jagels K."/>
            <person name="Leather S."/>
            <person name="Moule S."/>
            <person name="Norberczak H."/>
            <person name="O'Neil S."/>
            <person name="Ormond D."/>
            <person name="Price C."/>
            <person name="Rabbinowitsch E."/>
            <person name="Rutter S."/>
            <person name="Sanders M."/>
            <person name="Saunders D."/>
            <person name="Seeger K."/>
            <person name="Sharp S."/>
            <person name="Simmonds M."/>
            <person name="Skelton J."/>
            <person name="Squares R."/>
            <person name="Squares S."/>
            <person name="Stevens K."/>
            <person name="Unwin L."/>
            <person name="Whitehead S."/>
            <person name="Barrell B.G."/>
            <person name="Maskell D.J."/>
        </authorList>
    </citation>
    <scope>NUCLEOTIDE SEQUENCE [LARGE SCALE GENOMIC DNA]</scope>
    <source>
        <strain>12822 / ATCC BAA-587 / NCTC 13253</strain>
    </source>
</reference>
<accession>Q7W6L5</accession>
<proteinExistence type="inferred from homology"/>
<name>GLGA_BORPA</name>
<comment type="function">
    <text evidence="1">Synthesizes alpha-1,4-glucan chains using ADP-glucose.</text>
</comment>
<comment type="catalytic activity">
    <reaction evidence="1">
        <text>[(1-&gt;4)-alpha-D-glucosyl](n) + ADP-alpha-D-glucose = [(1-&gt;4)-alpha-D-glucosyl](n+1) + ADP + H(+)</text>
        <dbReference type="Rhea" id="RHEA:18189"/>
        <dbReference type="Rhea" id="RHEA-COMP:9584"/>
        <dbReference type="Rhea" id="RHEA-COMP:9587"/>
        <dbReference type="ChEBI" id="CHEBI:15378"/>
        <dbReference type="ChEBI" id="CHEBI:15444"/>
        <dbReference type="ChEBI" id="CHEBI:57498"/>
        <dbReference type="ChEBI" id="CHEBI:456216"/>
        <dbReference type="EC" id="2.4.1.21"/>
    </reaction>
</comment>
<comment type="pathway">
    <text evidence="1">Glycan biosynthesis; glycogen biosynthesis.</text>
</comment>
<comment type="similarity">
    <text evidence="1">Belongs to the glycosyltransferase 1 family. Bacterial/plant glycogen synthase subfamily.</text>
</comment>
<dbReference type="EC" id="2.4.1.21" evidence="1"/>
<dbReference type="EMBL" id="BX640431">
    <property type="protein sequence ID" value="CAE38182.1"/>
    <property type="molecule type" value="Genomic_DNA"/>
</dbReference>
<dbReference type="RefSeq" id="WP_010928785.1">
    <property type="nucleotide sequence ID" value="NC_002928.3"/>
</dbReference>
<dbReference type="SMR" id="Q7W6L5"/>
<dbReference type="CAZy" id="GT5">
    <property type="family name" value="Glycosyltransferase Family 5"/>
</dbReference>
<dbReference type="GeneID" id="93204677"/>
<dbReference type="KEGG" id="bpa:BPP2889"/>
<dbReference type="HOGENOM" id="CLU_009583_18_4_4"/>
<dbReference type="UniPathway" id="UPA00164"/>
<dbReference type="Proteomes" id="UP000001421">
    <property type="component" value="Chromosome"/>
</dbReference>
<dbReference type="GO" id="GO:0009011">
    <property type="term" value="F:alpha-1,4-glucan glucosyltransferase (ADP-glucose donor) activity"/>
    <property type="evidence" value="ECO:0007669"/>
    <property type="project" value="UniProtKB-UniRule"/>
</dbReference>
<dbReference type="GO" id="GO:0004373">
    <property type="term" value="F:alpha-1,4-glucan glucosyltransferase (UDP-glucose donor) activity"/>
    <property type="evidence" value="ECO:0007669"/>
    <property type="project" value="InterPro"/>
</dbReference>
<dbReference type="GO" id="GO:0005978">
    <property type="term" value="P:glycogen biosynthetic process"/>
    <property type="evidence" value="ECO:0007669"/>
    <property type="project" value="UniProtKB-UniRule"/>
</dbReference>
<dbReference type="CDD" id="cd03791">
    <property type="entry name" value="GT5_Glycogen_synthase_DULL1-like"/>
    <property type="match status" value="1"/>
</dbReference>
<dbReference type="Gene3D" id="3.40.50.2000">
    <property type="entry name" value="Glycogen Phosphorylase B"/>
    <property type="match status" value="2"/>
</dbReference>
<dbReference type="HAMAP" id="MF_00484">
    <property type="entry name" value="Glycogen_synth"/>
    <property type="match status" value="1"/>
</dbReference>
<dbReference type="InterPro" id="IPR001296">
    <property type="entry name" value="Glyco_trans_1"/>
</dbReference>
<dbReference type="InterPro" id="IPR011835">
    <property type="entry name" value="GS/SS"/>
</dbReference>
<dbReference type="InterPro" id="IPR013534">
    <property type="entry name" value="Starch_synth_cat_dom"/>
</dbReference>
<dbReference type="NCBIfam" id="TIGR02095">
    <property type="entry name" value="glgA"/>
    <property type="match status" value="1"/>
</dbReference>
<dbReference type="NCBIfam" id="NF001899">
    <property type="entry name" value="PRK00654.1-2"/>
    <property type="match status" value="1"/>
</dbReference>
<dbReference type="PANTHER" id="PTHR45825:SF11">
    <property type="entry name" value="ALPHA AMYLASE DOMAIN-CONTAINING PROTEIN"/>
    <property type="match status" value="1"/>
</dbReference>
<dbReference type="PANTHER" id="PTHR45825">
    <property type="entry name" value="GRANULE-BOUND STARCH SYNTHASE 1, CHLOROPLASTIC/AMYLOPLASTIC"/>
    <property type="match status" value="1"/>
</dbReference>
<dbReference type="Pfam" id="PF08323">
    <property type="entry name" value="Glyco_transf_5"/>
    <property type="match status" value="1"/>
</dbReference>
<dbReference type="Pfam" id="PF00534">
    <property type="entry name" value="Glycos_transf_1"/>
    <property type="match status" value="1"/>
</dbReference>
<dbReference type="SUPFAM" id="SSF53756">
    <property type="entry name" value="UDP-Glycosyltransferase/glycogen phosphorylase"/>
    <property type="match status" value="1"/>
</dbReference>
<gene>
    <name evidence="1" type="primary">glgA</name>
    <name type="ordered locus">BPP2889</name>
</gene>
<feature type="chain" id="PRO_0000188599" description="Glycogen synthase">
    <location>
        <begin position="1"/>
        <end position="510"/>
    </location>
</feature>
<feature type="binding site" evidence="1">
    <location>
        <position position="18"/>
    </location>
    <ligand>
        <name>ADP-alpha-D-glucose</name>
        <dbReference type="ChEBI" id="CHEBI:57498"/>
    </ligand>
</feature>
<sequence length="510" mass="53617">MTTIRTLVVAAEAFPLAKTGGLGDAVSGMVQALGHRPGGVDVQCELLMPAYRGTLDMVYRPRTVARLGGLPGGPASLVRGHCPGSGLSVLLLRNDALYDRPGIYVDDSGQGYPDNARRYAALAHAAARLAQGLPGLRPPHVVHAHDWHAALAPLLIHAAGLHYVKTLLTIHNLAFQGTFPAELASALGIPLACRHDDGALSDDSVNFLKAGIRYATRVTTVSRAYAREILTPAFGCGLHGLLRARGADLSPVPNGIDTALWNPAADPHLGGLRFDALDMRNKACCKAALQAELGLQPRADATVLAMGSRLTGQKMADVAIAALPALLEAHEHLQFALIGRGEPALETALRALAARYPGRCAVHIGYDEPLAHRLHAGADLLLHGSRFEPFGLTPLYAMRYGTLPVASRVGGMVDTIRDPGPAVEESCAGQGTGFLFDGSEPADMQLAVARALRALAKPAVCDAMRRNAMQADFSWRASAQAYAGLYASLASAPQRGRVPAPTLPLLANAA</sequence>
<organism>
    <name type="scientific">Bordetella parapertussis (strain 12822 / ATCC BAA-587 / NCTC 13253)</name>
    <dbReference type="NCBI Taxonomy" id="257311"/>
    <lineage>
        <taxon>Bacteria</taxon>
        <taxon>Pseudomonadati</taxon>
        <taxon>Pseudomonadota</taxon>
        <taxon>Betaproteobacteria</taxon>
        <taxon>Burkholderiales</taxon>
        <taxon>Alcaligenaceae</taxon>
        <taxon>Bordetella</taxon>
    </lineage>
</organism>
<keyword id="KW-0320">Glycogen biosynthesis</keyword>
<keyword id="KW-0328">Glycosyltransferase</keyword>
<keyword id="KW-0808">Transferase</keyword>
<protein>
    <recommendedName>
        <fullName evidence="1">Glycogen synthase</fullName>
        <ecNumber evidence="1">2.4.1.21</ecNumber>
    </recommendedName>
    <alternativeName>
        <fullName evidence="1">Starch [bacterial glycogen] synthase</fullName>
    </alternativeName>
</protein>
<evidence type="ECO:0000255" key="1">
    <source>
        <dbReference type="HAMAP-Rule" id="MF_00484"/>
    </source>
</evidence>